<name>RS8E_METJA</name>
<accession>P54055</accession>
<sequence length="129" mass="14539">MSVWQGRSRRKPTGGLYRPARKKRKYEMGREPIETHVAEEAFKIKKVRTRGGNLKVKVVRTGFANVLDPETGTCKKVKIITVRENKANIHYVRRNVITKGAIIETEIGLAKVTSRPGQDGTVNAILIKE</sequence>
<feature type="chain" id="PRO_0000122267" description="Small ribosomal subunit protein eS8">
    <location>
        <begin position="1"/>
        <end position="129"/>
    </location>
</feature>
<feature type="region of interest" description="Disordered" evidence="2">
    <location>
        <begin position="1"/>
        <end position="29"/>
    </location>
</feature>
<gene>
    <name type="primary">rps8e</name>
    <name type="ordered locus">MJ0673</name>
</gene>
<evidence type="ECO:0000250" key="1"/>
<evidence type="ECO:0000256" key="2">
    <source>
        <dbReference type="SAM" id="MobiDB-lite"/>
    </source>
</evidence>
<evidence type="ECO:0000305" key="3"/>
<comment type="subunit">
    <text evidence="1">Part of the 30S ribosomal subunit.</text>
</comment>
<comment type="similarity">
    <text evidence="3">Belongs to the eukaryotic ribosomal protein eS8 family.</text>
</comment>
<proteinExistence type="inferred from homology"/>
<organism>
    <name type="scientific">Methanocaldococcus jannaschii (strain ATCC 43067 / DSM 2661 / JAL-1 / JCM 10045 / NBRC 100440)</name>
    <name type="common">Methanococcus jannaschii</name>
    <dbReference type="NCBI Taxonomy" id="243232"/>
    <lineage>
        <taxon>Archaea</taxon>
        <taxon>Methanobacteriati</taxon>
        <taxon>Methanobacteriota</taxon>
        <taxon>Methanomada group</taxon>
        <taxon>Methanococci</taxon>
        <taxon>Methanococcales</taxon>
        <taxon>Methanocaldococcaceae</taxon>
        <taxon>Methanocaldococcus</taxon>
    </lineage>
</organism>
<reference key="1">
    <citation type="journal article" date="1996" name="Science">
        <title>Complete genome sequence of the methanogenic archaeon, Methanococcus jannaschii.</title>
        <authorList>
            <person name="Bult C.J."/>
            <person name="White O."/>
            <person name="Olsen G.J."/>
            <person name="Zhou L."/>
            <person name="Fleischmann R.D."/>
            <person name="Sutton G.G."/>
            <person name="Blake J.A."/>
            <person name="FitzGerald L.M."/>
            <person name="Clayton R.A."/>
            <person name="Gocayne J.D."/>
            <person name="Kerlavage A.R."/>
            <person name="Dougherty B.A."/>
            <person name="Tomb J.-F."/>
            <person name="Adams M.D."/>
            <person name="Reich C.I."/>
            <person name="Overbeek R."/>
            <person name="Kirkness E.F."/>
            <person name="Weinstock K.G."/>
            <person name="Merrick J.M."/>
            <person name="Glodek A."/>
            <person name="Scott J.L."/>
            <person name="Geoghagen N.S.M."/>
            <person name="Weidman J.F."/>
            <person name="Fuhrmann J.L."/>
            <person name="Nguyen D."/>
            <person name="Utterback T.R."/>
            <person name="Kelley J.M."/>
            <person name="Peterson J.D."/>
            <person name="Sadow P.W."/>
            <person name="Hanna M.C."/>
            <person name="Cotton M.D."/>
            <person name="Roberts K.M."/>
            <person name="Hurst M.A."/>
            <person name="Kaine B.P."/>
            <person name="Borodovsky M."/>
            <person name="Klenk H.-P."/>
            <person name="Fraser C.M."/>
            <person name="Smith H.O."/>
            <person name="Woese C.R."/>
            <person name="Venter J.C."/>
        </authorList>
    </citation>
    <scope>NUCLEOTIDE SEQUENCE [LARGE SCALE GENOMIC DNA]</scope>
    <source>
        <strain>ATCC 43067 / DSM 2661 / JAL-1 / JCM 10045 / NBRC 100440</strain>
    </source>
</reference>
<keyword id="KW-1185">Reference proteome</keyword>
<keyword id="KW-0687">Ribonucleoprotein</keyword>
<keyword id="KW-0689">Ribosomal protein</keyword>
<dbReference type="EMBL" id="L77117">
    <property type="protein sequence ID" value="AAB98667.1"/>
    <property type="molecule type" value="Genomic_DNA"/>
</dbReference>
<dbReference type="PIR" id="A64384">
    <property type="entry name" value="A64384"/>
</dbReference>
<dbReference type="RefSeq" id="WP_010870178.1">
    <property type="nucleotide sequence ID" value="NC_000909.1"/>
</dbReference>
<dbReference type="SMR" id="P54055"/>
<dbReference type="FunCoup" id="P54055">
    <property type="interactions" value="135"/>
</dbReference>
<dbReference type="STRING" id="243232.MJ_0673"/>
<dbReference type="PaxDb" id="243232-MJ_0673"/>
<dbReference type="EnsemblBacteria" id="AAB98667">
    <property type="protein sequence ID" value="AAB98667"/>
    <property type="gene ID" value="MJ_0673"/>
</dbReference>
<dbReference type="GeneID" id="1451539"/>
<dbReference type="KEGG" id="mja:MJ_0673"/>
<dbReference type="eggNOG" id="arCOG04154">
    <property type="taxonomic scope" value="Archaea"/>
</dbReference>
<dbReference type="HOGENOM" id="CLU_080597_2_1_2"/>
<dbReference type="InParanoid" id="P54055"/>
<dbReference type="OrthoDB" id="372305at2157"/>
<dbReference type="PhylomeDB" id="P54055"/>
<dbReference type="Proteomes" id="UP000000805">
    <property type="component" value="Chromosome"/>
</dbReference>
<dbReference type="GO" id="GO:0022627">
    <property type="term" value="C:cytosolic small ribosomal subunit"/>
    <property type="evidence" value="ECO:0000318"/>
    <property type="project" value="GO_Central"/>
</dbReference>
<dbReference type="GO" id="GO:0003735">
    <property type="term" value="F:structural constituent of ribosome"/>
    <property type="evidence" value="ECO:0000318"/>
    <property type="project" value="GO_Central"/>
</dbReference>
<dbReference type="GO" id="GO:0000462">
    <property type="term" value="P:maturation of SSU-rRNA from tricistronic rRNA transcript (SSU-rRNA, 5.8S rRNA, LSU-rRNA)"/>
    <property type="evidence" value="ECO:0000318"/>
    <property type="project" value="GO_Central"/>
</dbReference>
<dbReference type="GO" id="GO:0006412">
    <property type="term" value="P:translation"/>
    <property type="evidence" value="ECO:0007669"/>
    <property type="project" value="UniProtKB-UniRule"/>
</dbReference>
<dbReference type="CDD" id="cd11382">
    <property type="entry name" value="Ribosomal_S8e"/>
    <property type="match status" value="1"/>
</dbReference>
<dbReference type="FunFam" id="2.40.10.310:FF:000002">
    <property type="entry name" value="30S ribosomal protein S8e"/>
    <property type="match status" value="1"/>
</dbReference>
<dbReference type="Gene3D" id="2.40.10.310">
    <property type="match status" value="1"/>
</dbReference>
<dbReference type="HAMAP" id="MF_00029">
    <property type="entry name" value="Ribosomal_eS8"/>
    <property type="match status" value="1"/>
</dbReference>
<dbReference type="InterPro" id="IPR001047">
    <property type="entry name" value="Ribosomal_eS8"/>
</dbReference>
<dbReference type="InterPro" id="IPR018283">
    <property type="entry name" value="Ribosomal_eS8_CS"/>
</dbReference>
<dbReference type="InterPro" id="IPR020919">
    <property type="entry name" value="Ribosomal_protein_eS8_arc"/>
</dbReference>
<dbReference type="InterPro" id="IPR022309">
    <property type="entry name" value="Ribosomal_Se8/biogenesis_NSA2"/>
</dbReference>
<dbReference type="NCBIfam" id="TIGR00307">
    <property type="entry name" value="eS8"/>
    <property type="match status" value="1"/>
</dbReference>
<dbReference type="PANTHER" id="PTHR10394">
    <property type="entry name" value="40S RIBOSOMAL PROTEIN S8"/>
    <property type="match status" value="1"/>
</dbReference>
<dbReference type="Pfam" id="PF01201">
    <property type="entry name" value="Ribosomal_S8e"/>
    <property type="match status" value="1"/>
</dbReference>
<dbReference type="PROSITE" id="PS01193">
    <property type="entry name" value="RIBOSOMAL_S8E"/>
    <property type="match status" value="1"/>
</dbReference>
<protein>
    <recommendedName>
        <fullName evidence="3">Small ribosomal subunit protein eS8</fullName>
    </recommendedName>
    <alternativeName>
        <fullName>30S ribosomal protein S8e</fullName>
    </alternativeName>
</protein>